<organism>
    <name type="scientific">Mycobacterium tuberculosis (strain ATCC 25618 / H37Rv)</name>
    <dbReference type="NCBI Taxonomy" id="83332"/>
    <lineage>
        <taxon>Bacteria</taxon>
        <taxon>Bacillati</taxon>
        <taxon>Actinomycetota</taxon>
        <taxon>Actinomycetes</taxon>
        <taxon>Mycobacteriales</taxon>
        <taxon>Mycobacteriaceae</taxon>
        <taxon>Mycobacterium</taxon>
        <taxon>Mycobacterium tuberculosis complex</taxon>
    </lineage>
</organism>
<feature type="chain" id="PRO_0000103772" description="Multidrug efflux pump Tap">
    <location>
        <begin position="1"/>
        <end position="419"/>
    </location>
</feature>
<feature type="transmembrane region" description="Helical" evidence="2">
    <location>
        <begin position="7"/>
        <end position="29"/>
    </location>
</feature>
<feature type="transmembrane region" description="Helical" evidence="2">
    <location>
        <begin position="44"/>
        <end position="66"/>
    </location>
</feature>
<feature type="transmembrane region" description="Helical" evidence="2">
    <location>
        <begin position="73"/>
        <end position="95"/>
    </location>
</feature>
<feature type="transmembrane region" description="Helical" evidence="2">
    <location>
        <begin position="100"/>
        <end position="122"/>
    </location>
</feature>
<feature type="transmembrane region" description="Helical" evidence="2">
    <location>
        <begin position="149"/>
        <end position="171"/>
    </location>
</feature>
<feature type="transmembrane region" description="Helical" evidence="2">
    <location>
        <begin position="175"/>
        <end position="197"/>
    </location>
</feature>
<feature type="transmembrane region" description="Helical" evidence="2">
    <location>
        <begin position="218"/>
        <end position="240"/>
    </location>
</feature>
<feature type="transmembrane region" description="Helical" evidence="2">
    <location>
        <begin position="260"/>
        <end position="282"/>
    </location>
</feature>
<feature type="transmembrane region" description="Helical" evidence="2">
    <location>
        <begin position="289"/>
        <end position="308"/>
    </location>
</feature>
<feature type="transmembrane region" description="Helical" evidence="2">
    <location>
        <begin position="313"/>
        <end position="335"/>
    </location>
</feature>
<feature type="transmembrane region" description="Helical" evidence="2">
    <location>
        <begin position="348"/>
        <end position="370"/>
    </location>
</feature>
<feature type="transmembrane region" description="Helical" evidence="2">
    <location>
        <begin position="375"/>
        <end position="397"/>
    </location>
</feature>
<feature type="mutagenesis site" description="Shows higher efflux activity. Causes clinically relevant low-level drug resistance to pyrazinamide (PZA), isoniazid (INH) and streptomycin (SM).">
    <original>V</original>
    <variation>A</variation>
    <location>
        <position position="219"/>
    </location>
</feature>
<feature type="mutagenesis site" description="Shows higher efflux activity. Causes clinically relevant high-level drug resistance to pyrazinamide (PZA), isoniazid (INH) and streptomycin (SM).">
    <original>S</original>
    <variation>L</variation>
    <location>
        <position position="292"/>
    </location>
</feature>
<evidence type="ECO:0000250" key="1">
    <source>
        <dbReference type="UniProtKB" id="O32859"/>
    </source>
</evidence>
<evidence type="ECO:0000255" key="2"/>
<evidence type="ECO:0000269" key="3">
    <source>
    </source>
</evidence>
<evidence type="ECO:0000269" key="4">
    <source>
    </source>
</evidence>
<evidence type="ECO:0000269" key="5">
    <source>
    </source>
</evidence>
<evidence type="ECO:0000269" key="6">
    <source>
    </source>
</evidence>
<evidence type="ECO:0000269" key="7">
    <source>
    </source>
</evidence>
<evidence type="ECO:0000269" key="8">
    <source>
    </source>
</evidence>
<evidence type="ECO:0000303" key="9">
    <source>
    </source>
</evidence>
<evidence type="ECO:0000303" key="10">
    <source>
    </source>
</evidence>
<evidence type="ECO:0000305" key="11"/>
<accession>P9WJX9</accession>
<accession>L0T8U8</accession>
<accession>P64783</accession>
<accession>Q11060</accession>
<proteinExistence type="evidence at protein level"/>
<gene>
    <name evidence="10" type="primary">tap</name>
    <name type="ordered locus">Rv1258c</name>
    <name type="ORF">MTCY50.24</name>
</gene>
<dbReference type="EMBL" id="AL123456">
    <property type="protein sequence ID" value="CCP44014.1"/>
    <property type="molecule type" value="Genomic_DNA"/>
</dbReference>
<dbReference type="PIR" id="B70753">
    <property type="entry name" value="B70753"/>
</dbReference>
<dbReference type="RefSeq" id="NP_215774.1">
    <property type="nucleotide sequence ID" value="NC_000962.3"/>
</dbReference>
<dbReference type="RefSeq" id="WP_003406359.1">
    <property type="nucleotide sequence ID" value="NZ_NVQJ01000049.1"/>
</dbReference>
<dbReference type="SMR" id="P9WJX9"/>
<dbReference type="STRING" id="83332.Rv1258c"/>
<dbReference type="PaxDb" id="83332-Rv1258c"/>
<dbReference type="DNASU" id="887056"/>
<dbReference type="GeneID" id="887056"/>
<dbReference type="KEGG" id="mtu:Rv1258c"/>
<dbReference type="KEGG" id="mtv:RVBD_1258c"/>
<dbReference type="TubercuList" id="Rv1258c"/>
<dbReference type="eggNOG" id="COG2271">
    <property type="taxonomic scope" value="Bacteria"/>
</dbReference>
<dbReference type="InParanoid" id="P9WJX9"/>
<dbReference type="OrthoDB" id="9793136at2"/>
<dbReference type="PhylomeDB" id="P9WJX9"/>
<dbReference type="PHI-base" id="PHI:7049"/>
<dbReference type="Proteomes" id="UP000001584">
    <property type="component" value="Chromosome"/>
</dbReference>
<dbReference type="GO" id="GO:0005886">
    <property type="term" value="C:plasma membrane"/>
    <property type="evidence" value="ECO:0000318"/>
    <property type="project" value="GO_Central"/>
</dbReference>
<dbReference type="GO" id="GO:0015562">
    <property type="term" value="F:efflux transmembrane transporter activity"/>
    <property type="evidence" value="ECO:0000315"/>
    <property type="project" value="MTBBASE"/>
</dbReference>
<dbReference type="GO" id="GO:0046677">
    <property type="term" value="P:response to antibiotic"/>
    <property type="evidence" value="ECO:0000270"/>
    <property type="project" value="MTBBASE"/>
</dbReference>
<dbReference type="CDD" id="cd06173">
    <property type="entry name" value="MFS_MefA_like"/>
    <property type="match status" value="1"/>
</dbReference>
<dbReference type="Gene3D" id="1.20.1250.20">
    <property type="entry name" value="MFS general substrate transporter like domains"/>
    <property type="match status" value="2"/>
</dbReference>
<dbReference type="InterPro" id="IPR011701">
    <property type="entry name" value="MFS"/>
</dbReference>
<dbReference type="InterPro" id="IPR020846">
    <property type="entry name" value="MFS_dom"/>
</dbReference>
<dbReference type="InterPro" id="IPR036259">
    <property type="entry name" value="MFS_trans_sf"/>
</dbReference>
<dbReference type="PANTHER" id="PTHR23513:SF9">
    <property type="entry name" value="ENTEROBACTIN EXPORTER ENTS"/>
    <property type="match status" value="1"/>
</dbReference>
<dbReference type="PANTHER" id="PTHR23513">
    <property type="entry name" value="INTEGRAL MEMBRANE EFFLUX PROTEIN-RELATED"/>
    <property type="match status" value="1"/>
</dbReference>
<dbReference type="Pfam" id="PF07690">
    <property type="entry name" value="MFS_1"/>
    <property type="match status" value="1"/>
</dbReference>
<dbReference type="SUPFAM" id="SSF103473">
    <property type="entry name" value="MFS general substrate transporter"/>
    <property type="match status" value="1"/>
</dbReference>
<dbReference type="PROSITE" id="PS50850">
    <property type="entry name" value="MFS"/>
    <property type="match status" value="1"/>
</dbReference>
<protein>
    <recommendedName>
        <fullName evidence="11">Multidrug efflux pump Tap</fullName>
    </recommendedName>
    <alternativeName>
        <fullName evidence="9">Tetracycline/aminoglycoside resistance-like efflux pump</fullName>
    </alternativeName>
</protein>
<keyword id="KW-0046">Antibiotic resistance</keyword>
<keyword id="KW-0997">Cell inner membrane</keyword>
<keyword id="KW-1003">Cell membrane</keyword>
<keyword id="KW-0472">Membrane</keyword>
<keyword id="KW-1185">Reference proteome</keyword>
<keyword id="KW-0812">Transmembrane</keyword>
<keyword id="KW-1133">Transmembrane helix</keyword>
<keyword id="KW-0813">Transport</keyword>
<reference key="1">
    <citation type="journal article" date="1998" name="Nature">
        <title>Deciphering the biology of Mycobacterium tuberculosis from the complete genome sequence.</title>
        <authorList>
            <person name="Cole S.T."/>
            <person name="Brosch R."/>
            <person name="Parkhill J."/>
            <person name="Garnier T."/>
            <person name="Churcher C.M."/>
            <person name="Harris D.E."/>
            <person name="Gordon S.V."/>
            <person name="Eiglmeier K."/>
            <person name="Gas S."/>
            <person name="Barry C.E. III"/>
            <person name="Tekaia F."/>
            <person name="Badcock K."/>
            <person name="Basham D."/>
            <person name="Brown D."/>
            <person name="Chillingworth T."/>
            <person name="Connor R."/>
            <person name="Davies R.M."/>
            <person name="Devlin K."/>
            <person name="Feltwell T."/>
            <person name="Gentles S."/>
            <person name="Hamlin N."/>
            <person name="Holroyd S."/>
            <person name="Hornsby T."/>
            <person name="Jagels K."/>
            <person name="Krogh A."/>
            <person name="McLean J."/>
            <person name="Moule S."/>
            <person name="Murphy L.D."/>
            <person name="Oliver S."/>
            <person name="Osborne J."/>
            <person name="Quail M.A."/>
            <person name="Rajandream M.A."/>
            <person name="Rogers J."/>
            <person name="Rutter S."/>
            <person name="Seeger K."/>
            <person name="Skelton S."/>
            <person name="Squares S."/>
            <person name="Squares R."/>
            <person name="Sulston J.E."/>
            <person name="Taylor K."/>
            <person name="Whitehead S."/>
            <person name="Barrell B.G."/>
        </authorList>
    </citation>
    <scope>NUCLEOTIDE SEQUENCE [LARGE SCALE GENOMIC DNA]</scope>
    <source>
        <strain>ATCC 25618 / H37Rv</strain>
    </source>
</reference>
<reference key="2">
    <citation type="journal article" date="1998" name="J. Bacteriol.">
        <title>Molecular cloning and characterization of Tap, a putative multidrug efflux pump present in Mycobacterium fortuitum and Mycobacterium tuberculosis.</title>
        <authorList>
            <person name="Ainsa J.A."/>
            <person name="Blokpoel M.C."/>
            <person name="Otal I."/>
            <person name="Young D.B."/>
            <person name="De Smet K.A."/>
            <person name="Martin C."/>
        </authorList>
    </citation>
    <scope>FUNCTION IN TETRACYCLINE RESISTANCE</scope>
    <source>
        <strain>H37Rv</strain>
    </source>
</reference>
<reference key="3">
    <citation type="journal article" date="2002" name="Mol. Med.">
        <title>The multidrug transporters belonging to major facilitator superfamily in Mycobacterium tuberculosis.</title>
        <authorList>
            <person name="De Rossi E."/>
            <person name="Arrigo P."/>
            <person name="Bellinzoni M."/>
            <person name="Silva P.A."/>
            <person name="Martin C."/>
            <person name="Ainsa J.A."/>
            <person name="Guglierame P."/>
            <person name="Riccardi G."/>
        </authorList>
    </citation>
    <scope>FUNCTION</scope>
    <source>
        <strain>ATCC 25618 / H37Rv</strain>
    </source>
</reference>
<reference key="4">
    <citation type="journal article" date="2004" name="Infection">
        <title>Mycobacterium tuberculosis isolate with a distinct genomic identity overexpresses a tap-like efflux pump.</title>
        <authorList>
            <person name="Siddiqi N."/>
            <person name="Das R."/>
            <person name="Pathak N."/>
            <person name="Banerjee S."/>
            <person name="Ahmed N."/>
            <person name="Katoch V.M."/>
            <person name="Hasnain S.E."/>
        </authorList>
    </citation>
    <scope>INDUCTION</scope>
</reference>
<reference key="5">
    <citation type="journal article" date="2010" name="J. Antimicrob. Chemother.">
        <title>Piperine as an inhibitor of Rv1258c, a putative multidrug efflux pump of Mycobacterium tuberculosis.</title>
        <authorList>
            <person name="Sharma S."/>
            <person name="Kumar M."/>
            <person name="Sharma S."/>
            <person name="Nargotra A."/>
            <person name="Koul S."/>
            <person name="Khan I.A."/>
        </authorList>
    </citation>
    <scope>FUNCTION</scope>
    <scope>ACTIVITY REGULATION</scope>
    <source>
        <strain>ATCC 27294 / TMC 102 / H37Rv</strain>
    </source>
</reference>
<reference key="6">
    <citation type="journal article" date="2014" name="Bioorg. Med. Chem. Lett.">
        <title>Synthesis of new verapamil analogues and their evaluation in combination with rifampicin against Mycobacterium tuberculosis and molecular docking studies in the binding site of efflux protein Rv1258c.</title>
        <authorList>
            <person name="Singh K."/>
            <person name="Kumar M."/>
            <person name="Pavadai E."/>
            <person name="Naran K."/>
            <person name="Warner D.F."/>
            <person name="Ruminski P.G."/>
            <person name="Chibale K."/>
        </authorList>
    </citation>
    <scope>ACTIVITY REGULATION</scope>
</reference>
<reference key="7">
    <citation type="journal article" date="2019" name="Front. Microbiol.">
        <title>Mutations in efflux pump Rv1258c (Tap) cause resistance to pyrazinamide, isoniazid, and streptomycin in M. tuberculosis.</title>
        <authorList>
            <person name="Liu J."/>
            <person name="Shi W."/>
            <person name="Zhang S."/>
            <person name="Hao X."/>
            <person name="Maslov D.A."/>
            <person name="Shur K.V."/>
            <person name="Bekker O.B."/>
            <person name="Danilenko V.N."/>
            <person name="Zhang Y."/>
        </authorList>
    </citation>
    <scope>FUNCTION</scope>
    <scope>MUTAGENESIS OF VAL-219 AND SER-292</scope>
    <source>
        <strain>H37Ra</strain>
    </source>
</reference>
<reference key="8">
    <citation type="journal article" date="2018" name="PLoS ONE">
        <title>Molecular modelling and simulation studies of the Mycobacterium tuberculosis multidrug efflux pump protein Rv1258c.</title>
        <authorList>
            <person name="Cloete R."/>
            <person name="Kapp E."/>
            <person name="Joubert J."/>
            <person name="Christoffels A."/>
            <person name="Malan S.F."/>
        </authorList>
    </citation>
    <scope>3D-STRUCTURE MODELING</scope>
</reference>
<name>TAP_MYCTU</name>
<comment type="function">
    <text evidence="1 3 5 7 8">Efflux pump that contributes to intrinsic antibiotic resistance (PubMed:12520088, PubMed:20525733, PubMed:30837962, PubMed:9811639). The pump uses the electrochemical gradient as a source of energy (By similarity). Confers resistance to rifampicin (PubMed:20525733). Confers low-level resistance to tetracycline and to several aminoglycosides, including streptomycin, gentamicin, 2'-N-ethylnetilmicin and 6'-N-ethylnetilmicin (PubMed:12520088, PubMed:9811639).</text>
</comment>
<comment type="activity regulation">
    <text evidence="5 6">Inhibited by piperine, verapamil and verapamil analogs.</text>
</comment>
<comment type="subcellular location">
    <subcellularLocation>
        <location evidence="11">Cell inner membrane</location>
        <topology evidence="2">Multi-pass membrane protein</topology>
    </subcellularLocation>
</comment>
<comment type="induction">
    <text evidence="4">Induced by rifampicin and ofloxacin.</text>
</comment>
<comment type="miscellaneous">
    <text evidence="7">Point mutations found in this efflux pump in clinical isolates can play an important role in conferring clinically relevant resistance to multiple drugs, including pyrazinamide, and could explain some previously unaccounted drug resistance in clinical strains.</text>
</comment>
<comment type="similarity">
    <text evidence="11">Belongs to the major facilitator superfamily. Drug:H(+) antiporter-3 (DHA3) (TC 2.A.1.21) family.</text>
</comment>
<sequence>MRNSNRGPAFLILFATLMAAAGDGVSIVAFPWLVLQREGSAGQASIVASATMLPLLFATLVAGTAVDYFGRRRVSMVADALSGAAVAGVPLVAWGYGGDAVNVLVLAVLAALAAAFGPAGMTARDSMLPEAAARAGWSLDRINGAYEAILNLAFIVGPAIGGLMIATVGGITTMWITATAFGLSILAIAALQLEGAGKPHHTSRPQGLVSGIAEGLRFVWNLRVLRTLGMIDLTVTALYLPMESVLFPKYFTDHQQPVQLGWALMAIAGGGLVGALGYAVLAIRVPRRVTMSTAVLTLGLASMVIAFLPPLPVIMVLCAVVGLVYGPIQPIYNYVIQTRAAQHLRGRVVGVMTSLAYAAGPLGLLLAGPLTDAAGLHATFLALALPIVCTGLVAIRLPALRELDLAPQADIDRPVGSAQ</sequence>